<gene>
    <name type="primary">jade3</name>
    <name type="synonym">phf16</name>
</gene>
<dbReference type="EMBL" id="BC045468">
    <property type="protein sequence ID" value="AAH45468.1"/>
    <property type="molecule type" value="mRNA"/>
</dbReference>
<dbReference type="EMBL" id="BN000277">
    <property type="protein sequence ID" value="CAE30492.1"/>
    <property type="molecule type" value="mRNA"/>
</dbReference>
<dbReference type="SMR" id="Q7ZVP1"/>
<dbReference type="BioGRID" id="80829">
    <property type="interactions" value="1"/>
</dbReference>
<dbReference type="FunCoup" id="Q7ZVP1">
    <property type="interactions" value="497"/>
</dbReference>
<dbReference type="STRING" id="7955.ENSDARP00000120486"/>
<dbReference type="PaxDb" id="7955-ENSDARP00000120486"/>
<dbReference type="AGR" id="ZFIN:ZDB-GENE-030131-928"/>
<dbReference type="ZFIN" id="ZDB-GENE-030131-928">
    <property type="gene designation" value="jade3"/>
</dbReference>
<dbReference type="eggNOG" id="KOG0954">
    <property type="taxonomic scope" value="Eukaryota"/>
</dbReference>
<dbReference type="InParanoid" id="Q7ZVP1"/>
<dbReference type="PhylomeDB" id="Q7ZVP1"/>
<dbReference type="PRO" id="PR:Q7ZVP1"/>
<dbReference type="Proteomes" id="UP000000437">
    <property type="component" value="Unplaced"/>
</dbReference>
<dbReference type="GO" id="GO:0000123">
    <property type="term" value="C:histone acetyltransferase complex"/>
    <property type="evidence" value="ECO:0000318"/>
    <property type="project" value="GO_Central"/>
</dbReference>
<dbReference type="GO" id="GO:0008270">
    <property type="term" value="F:zinc ion binding"/>
    <property type="evidence" value="ECO:0007669"/>
    <property type="project" value="UniProtKB-KW"/>
</dbReference>
<dbReference type="GO" id="GO:0006357">
    <property type="term" value="P:regulation of transcription by RNA polymerase II"/>
    <property type="evidence" value="ECO:0000318"/>
    <property type="project" value="GO_Central"/>
</dbReference>
<dbReference type="CDD" id="cd15706">
    <property type="entry name" value="ePHD_JADE3"/>
    <property type="match status" value="1"/>
</dbReference>
<dbReference type="CDD" id="cd15681">
    <property type="entry name" value="PHD_JADE3"/>
    <property type="match status" value="1"/>
</dbReference>
<dbReference type="FunFam" id="3.30.40.10:FF:000004">
    <property type="entry name" value="Jade family PHD finger 2"/>
    <property type="match status" value="1"/>
</dbReference>
<dbReference type="FunFam" id="3.30.40.10:FF:000030">
    <property type="entry name" value="Protein Jade-1 isoform 1"/>
    <property type="match status" value="1"/>
</dbReference>
<dbReference type="Gene3D" id="3.30.40.10">
    <property type="entry name" value="Zinc/RING finger domain, C3HC4 (zinc finger)"/>
    <property type="match status" value="2"/>
</dbReference>
<dbReference type="InterPro" id="IPR019542">
    <property type="entry name" value="Enhancer_polycomb-like_N"/>
</dbReference>
<dbReference type="InterPro" id="IPR034732">
    <property type="entry name" value="EPHD"/>
</dbReference>
<dbReference type="InterPro" id="IPR050701">
    <property type="entry name" value="Histone_Mod_Regulator"/>
</dbReference>
<dbReference type="InterPro" id="IPR039550">
    <property type="entry name" value="JADE3_PHD"/>
</dbReference>
<dbReference type="InterPro" id="IPR019786">
    <property type="entry name" value="Zinc_finger_PHD-type_CS"/>
</dbReference>
<dbReference type="InterPro" id="IPR011011">
    <property type="entry name" value="Znf_FYVE_PHD"/>
</dbReference>
<dbReference type="InterPro" id="IPR001965">
    <property type="entry name" value="Znf_PHD"/>
</dbReference>
<dbReference type="InterPro" id="IPR019787">
    <property type="entry name" value="Znf_PHD-finger"/>
</dbReference>
<dbReference type="InterPro" id="IPR013083">
    <property type="entry name" value="Znf_RING/FYVE/PHD"/>
</dbReference>
<dbReference type="PANTHER" id="PTHR13793">
    <property type="entry name" value="PHD FINGER PROTEINS"/>
    <property type="match status" value="1"/>
</dbReference>
<dbReference type="PANTHER" id="PTHR13793:SF27">
    <property type="entry name" value="PROTEIN JADE-3"/>
    <property type="match status" value="1"/>
</dbReference>
<dbReference type="Pfam" id="PF10513">
    <property type="entry name" value="EPL1"/>
    <property type="match status" value="1"/>
</dbReference>
<dbReference type="Pfam" id="PF13831">
    <property type="entry name" value="PHD_2"/>
    <property type="match status" value="1"/>
</dbReference>
<dbReference type="Pfam" id="PF13832">
    <property type="entry name" value="zf-HC5HC2H_2"/>
    <property type="match status" value="1"/>
</dbReference>
<dbReference type="SMART" id="SM00249">
    <property type="entry name" value="PHD"/>
    <property type="match status" value="2"/>
</dbReference>
<dbReference type="SUPFAM" id="SSF57903">
    <property type="entry name" value="FYVE/PHD zinc finger"/>
    <property type="match status" value="1"/>
</dbReference>
<dbReference type="PROSITE" id="PS51805">
    <property type="entry name" value="EPHD"/>
    <property type="match status" value="1"/>
</dbReference>
<dbReference type="PROSITE" id="PS01359">
    <property type="entry name" value="ZF_PHD_1"/>
    <property type="match status" value="1"/>
</dbReference>
<dbReference type="PROSITE" id="PS50016">
    <property type="entry name" value="ZF_PHD_2"/>
    <property type="match status" value="1"/>
</dbReference>
<reference key="1">
    <citation type="submission" date="2003-01" db="EMBL/GenBank/DDBJ databases">
        <authorList>
            <consortium name="NIH - Zebrafish Gene Collection (ZGC) project"/>
        </authorList>
    </citation>
    <scope>NUCLEOTIDE SEQUENCE [LARGE SCALE MRNA]</scope>
    <source>
        <strain>AB</strain>
    </source>
</reference>
<reference key="2">
    <citation type="journal article" date="2003" name="Mol. Cell. Biol.">
        <title>Identification of Jade1, a gene encoding a PHD zinc finger protein, in a gene trap mutagenesis screen for genes involved in anteroposterior axis development.</title>
        <authorList>
            <person name="Tzouanacou E."/>
            <person name="Tweedie S."/>
            <person name="Wilson V."/>
        </authorList>
    </citation>
    <scope>IDENTIFICATION</scope>
</reference>
<name>JADE3_DANRE</name>
<accession>Q7ZVP1</accession>
<keyword id="KW-0479">Metal-binding</keyword>
<keyword id="KW-1185">Reference proteome</keyword>
<keyword id="KW-0677">Repeat</keyword>
<keyword id="KW-0862">Zinc</keyword>
<keyword id="KW-0863">Zinc-finger</keyword>
<sequence>MKRLRTPSSSDSSDNESPSTSFSSNKYGSKPGTPASAQKKPAEVFRKDLISAMKLPDSHHISSEDYYLLADTWKQEWEKGVQVLASPDTIPQPSVRIITEKPKEVLFSKPRKYIQCWSQDSTETGYVNIKELAEAMCRYDLDDMDLYWLQQLNAELGMMGDGVVDELTMERVMEALERQCHENMNHAIETEEGLGIEYDEDVICDVCRSPDSEEGNDMVFCDKCNICVHQACYGIVKVPDGNWLCRTCVLGITPQCLLCPKTGGAMKATRAGTKWAHVSCALWIPEVSIACPERMEPITKVSHIPPSRWSLICSLCKLKTGACIQCSVKNCTIPFHVTCAFEHSLEMKTILDEGDEVKFKSYCLKHSKPKAGEPGLSPARHKPPTETDKLSLRAQKLQELEEEFYTYVHPEEVAHDLSLPLHLLDFIFQYWKMKRKSNFNKALLPPKEDEENLLLQPQEDSIHTRMRMFMHLRQDLERVRNLCYMVSRREKLKLSQSKAQEQIFNLHVKLVNQELSAGLPVSSSIENLLFHPPPRITLKLKMPKVQLGNGKSSSKSGNGPLCPDNSCNLYDTSEGGIGQGKPQLHLGRQRIEERINGILPASIYIRRDGGTPPLAVKQSGKPLALHAALHGQSSNGKTKNEAEKSRQIKSNGILDKPILQRDTSCLAASEKDPRSEISGKSQSSGFHKTSLEHFSRSLKEATVSLVRTEDLRTFEKNSRKSSGFSKPLSTERPQGGGRASQESDGYCPDAELSDSEPEAKGKCRQGGRTQNQRGDYVKSASRAKHSYGSRTSVQR</sequence>
<proteinExistence type="evidence at transcript level"/>
<comment type="function">
    <text evidence="1">Scaffold subunit of some HBO1 complexes, which have a histone H4 acetyltransferase activity.</text>
</comment>
<comment type="subunit">
    <text evidence="1">Component of the HBO1 complex.</text>
</comment>
<comment type="similarity">
    <text evidence="5">Belongs to the JADE family.</text>
</comment>
<evidence type="ECO:0000250" key="1">
    <source>
        <dbReference type="UniProtKB" id="Q92613"/>
    </source>
</evidence>
<evidence type="ECO:0000255" key="2">
    <source>
        <dbReference type="PROSITE-ProRule" id="PRU00146"/>
    </source>
</evidence>
<evidence type="ECO:0000255" key="3">
    <source>
        <dbReference type="PROSITE-ProRule" id="PRU01146"/>
    </source>
</evidence>
<evidence type="ECO:0000256" key="4">
    <source>
        <dbReference type="SAM" id="MobiDB-lite"/>
    </source>
</evidence>
<evidence type="ECO:0000305" key="5"/>
<organism>
    <name type="scientific">Danio rerio</name>
    <name type="common">Zebrafish</name>
    <name type="synonym">Brachydanio rerio</name>
    <dbReference type="NCBI Taxonomy" id="7955"/>
    <lineage>
        <taxon>Eukaryota</taxon>
        <taxon>Metazoa</taxon>
        <taxon>Chordata</taxon>
        <taxon>Craniata</taxon>
        <taxon>Vertebrata</taxon>
        <taxon>Euteleostomi</taxon>
        <taxon>Actinopterygii</taxon>
        <taxon>Neopterygii</taxon>
        <taxon>Teleostei</taxon>
        <taxon>Ostariophysi</taxon>
        <taxon>Cypriniformes</taxon>
        <taxon>Danionidae</taxon>
        <taxon>Danioninae</taxon>
        <taxon>Danio</taxon>
    </lineage>
</organism>
<feature type="chain" id="PRO_0000253535" description="Protein Jade-3">
    <location>
        <begin position="1"/>
        <end position="795"/>
    </location>
</feature>
<feature type="zinc finger region" description="PHD-type 1" evidence="2">
    <location>
        <begin position="201"/>
        <end position="251"/>
    </location>
</feature>
<feature type="zinc finger region" description="C2HC pre-PHD-type" evidence="3">
    <location>
        <begin position="253"/>
        <end position="287"/>
    </location>
</feature>
<feature type="zinc finger region" description="PHD-type 2" evidence="3">
    <location>
        <begin position="311"/>
        <end position="367"/>
    </location>
</feature>
<feature type="region of interest" description="Disordered" evidence="4">
    <location>
        <begin position="1"/>
        <end position="41"/>
    </location>
</feature>
<feature type="region of interest" description="Disordered" evidence="4">
    <location>
        <begin position="630"/>
        <end position="654"/>
    </location>
</feature>
<feature type="region of interest" description="Disordered" evidence="4">
    <location>
        <begin position="667"/>
        <end position="687"/>
    </location>
</feature>
<feature type="region of interest" description="Disordered" evidence="4">
    <location>
        <begin position="714"/>
        <end position="795"/>
    </location>
</feature>
<feature type="compositionally biased region" description="Low complexity" evidence="4">
    <location>
        <begin position="1"/>
        <end position="25"/>
    </location>
</feature>
<feature type="compositionally biased region" description="Polar residues" evidence="4">
    <location>
        <begin position="678"/>
        <end position="687"/>
    </location>
</feature>
<feature type="compositionally biased region" description="Polar residues" evidence="4">
    <location>
        <begin position="720"/>
        <end position="732"/>
    </location>
</feature>
<protein>
    <recommendedName>
        <fullName>Protein Jade-3</fullName>
    </recommendedName>
    <alternativeName>
        <fullName>Jade family PHD finger protein 3</fullName>
    </alternativeName>
    <alternativeName>
        <fullName>PHD finger protein 16</fullName>
    </alternativeName>
</protein>